<protein>
    <recommendedName>
        <fullName evidence="9">FAD-binding monooxygenase lolF1</fullName>
        <ecNumber evidence="11">1.14.13.-</ecNumber>
    </recommendedName>
    <alternativeName>
        <fullName evidence="9">Loline biosynthesis cluster 1 protein F</fullName>
    </alternativeName>
</protein>
<accession>Q5MNI7</accession>
<name>LOLF1_EPIUN</name>
<comment type="function">
    <text evidence="2 3 4 5 6 7 8">FAD-binding monooxygenase; part of the gene cluster that mediates the biosynthesis of loline alkaloids, potent insecticidal agents composed of a pyrrolizidine ring system and an uncommon ether bridge linking carbons 2 and 7 (PubMed:15654104). Lolines are structurally differentiated by the various modifications of the L-amino group and include norloline, loline, N-methylloline, N-acetylloline, N-acetylnorloline, and N-formylloline (PubMed:15861432, PubMed:25531527). The first committed step is the condensation of O-acetyl-L-homoserine (derived from L-aspartic acid) and L-proline, probably catalyzed by the gamma-type pyridoxal 5'-phosphate(PLP)-dependent enzyme lolC, to give the diamino diacid, NACPP (PubMed:15861432, PubMed:16755627). Ensuing cyclization, decarboxylation, and acetylation steps yield 1-exo-acetamidopyrrolizidine (AcAP) (PubMed:24374065). LolO is required for installation of the ether bridge upon the pathway intermediate, 1-exo-acetamidopyrrolizidine (AcAP) (PubMed:29537853). In sequential 2-oxoglutarate- and O(2)-consuming steps, lolO removes hydrogens from C2 and C7 of AcAP to form both carbon-oxygen bonds in N-acetylnorloline (NANL), the precursor to all other lolines (PubMed:24374065, PubMed:29537853). The enzymes lolD, lolE, lolF and lolT have also been proposed to be involved in the ether-bridge installation (PubMed:15654104). Further processing of the exocyclic moiety of NANL by fungal N-acetamidase (LolN), methyltransferase (LolM), and cytochrome P450 (LolP) enzymes, with occasional involvement of a plant acetyltransferase, generates the other known lolines (PubMed:18655839, PubMed:25531527). LolN transforms NANL to norlonine which is monomethylated and dimethylated to respectively lonine and N-methyllonine (NML) by lolM (PubMed:25531527). LolP catalyzes hydroxylation of the methyl group in N-methylloline (NML) and further oxygenation to N-formylloline (NFL) (PubMed:18655839). A plant acetyltransferase is responsible for the acetylation of loline to form N-acetylloline (NAL) (PubMed:25531527). LolA might interact with aspartate kinase to prevent feedback inhibition of its activity by these end products and thereby promote production of L-homoserine from L-aspartate (PubMed:15654104).</text>
</comment>
<comment type="cofactor">
    <cofactor evidence="1">
        <name>FAD</name>
        <dbReference type="ChEBI" id="CHEBI:57692"/>
    </cofactor>
    <text evidence="1">Binds 1 FAD per subunit.</text>
</comment>
<comment type="pathway">
    <text evidence="11">Alkaloid biosynthesis.</text>
</comment>
<comment type="induction">
    <text evidence="2">Expression is induced in loline alkaloid-producing cultures as well as in planta (PubMed:15654104).</text>
</comment>
<comment type="biotechnology">
    <text evidence="12">Loline alkaloids show broad-spectrum anti-insect activity, and different lolines may have different biological activities (PubMed:25531527). In vitro tests of NFL, NAL, NML, and semisynthetic loline derivatives with long carbon-chain acylations on the 1-amine have shown that many are effective against both fall armyworm larvae and European corn borer larvae, but the effects seem to differ depending on the modifications (PubMed:25531527). N-Formylloline reduces the weight gain of fall armyworms by deterring feeding, and does not significantly affect corn borers (PubMed:25531527). In contrast, NAL reduces the weight gain of corn borer larvae without changing larval feeding behavior, indicating that its effect is due to metabolic toxicity. N-formylloline, NAL, and NML are almost as potent as nicotine in insecticidal activity against green bugs (PubMed:25531527).</text>
</comment>
<comment type="similarity">
    <text evidence="10">Belongs to the FAD-binding monooxygenase family.</text>
</comment>
<keyword id="KW-0017">Alkaloid metabolism</keyword>
<keyword id="KW-0274">FAD</keyword>
<keyword id="KW-0285">Flavoprotein</keyword>
<keyword id="KW-0503">Monooxygenase</keyword>
<keyword id="KW-0521">NADP</keyword>
<keyword id="KW-0560">Oxidoreductase</keyword>
<organism>
    <name type="scientific">Epichloe uncinata</name>
    <name type="common">Endophyte fungus</name>
    <name type="synonym">Neotyphodium uncinatum</name>
    <dbReference type="NCBI Taxonomy" id="5050"/>
    <lineage>
        <taxon>Eukaryota</taxon>
        <taxon>Fungi</taxon>
        <taxon>Dikarya</taxon>
        <taxon>Ascomycota</taxon>
        <taxon>Pezizomycotina</taxon>
        <taxon>Sordariomycetes</taxon>
        <taxon>Hypocreomycetidae</taxon>
        <taxon>Hypocreales</taxon>
        <taxon>Clavicipitaceae</taxon>
        <taxon>Epichloe</taxon>
    </lineage>
</organism>
<feature type="chain" id="PRO_0000444359" description="FAD-binding monooxygenase lolF1">
    <location>
        <begin position="1"/>
        <end position="540"/>
    </location>
</feature>
<feature type="binding site" evidence="1">
    <location>
        <begin position="43"/>
        <end position="46"/>
    </location>
    <ligand>
        <name>FAD</name>
        <dbReference type="ChEBI" id="CHEBI:57692"/>
    </ligand>
</feature>
<feature type="binding site" evidence="1">
    <location>
        <begin position="53"/>
        <end position="55"/>
    </location>
    <ligand>
        <name>NADP(+)</name>
        <dbReference type="ChEBI" id="CHEBI:58349"/>
    </ligand>
</feature>
<feature type="binding site" evidence="1">
    <location>
        <begin position="55"/>
        <end position="58"/>
    </location>
    <ligand>
        <name>FAD</name>
        <dbReference type="ChEBI" id="CHEBI:57692"/>
    </ligand>
</feature>
<feature type="binding site" evidence="1">
    <location>
        <begin position="182"/>
        <end position="188"/>
    </location>
    <ligand>
        <name>NADP(+)</name>
        <dbReference type="ChEBI" id="CHEBI:58349"/>
    </ligand>
</feature>
<feature type="binding site" evidence="1">
    <location>
        <begin position="205"/>
        <end position="206"/>
    </location>
    <ligand>
        <name>NADP(+)</name>
        <dbReference type="ChEBI" id="CHEBI:58349"/>
    </ligand>
</feature>
<feature type="site" description="Transition state stabilizer" evidence="1">
    <location>
        <position position="329"/>
    </location>
</feature>
<sequence length="540" mass="61454">MTLTNLDVIVVGAGFSGILAVYRLRKLGFRVQGFERQERLGGVWRENAYPGAAVDSLFPFYQFYDAELLQDWEWVEQFPTRAEMLRYFDHVDKRWEISASFEFGVSVSAARYSETTQRWTVSLEDGRRAEARWFIPAVGFSSVLNIPRIPGMSRFRGPIYHTAKWPHDAVSMRGKRVAVIGTGPSGVQIIQSVGKIAKAMTIFQQSPCLTLRKYGSPSQTATALCMRPDDHREALRLGLQTSNGFGYVPRDQDTLDVPIEERNHFYQQRYLAGGWAFWMAGFRDLCQNIQANRDAYDFWARRTRARISDVAKRELLVPQIPSFAFGIKRPCLEEDLYEVMDQPHVKVIDISNQQIELITETGIRVHGQTVECEAIILATGFGDEASGLRSLHIRGRNGIRLEDAWSDGVESHLGMAIHSFPNMVILYGPQCPTLLVNSPAVITVQVEWLCEIIARCQQAGICQLEATSKSHCQWERKMSLLWDKTLYHTHARKSKKTAEANKEEKTWVGGLILYRRELENCLANNLEGFQAWHVEETGLL</sequence>
<dbReference type="EC" id="1.14.13.-" evidence="11"/>
<dbReference type="EMBL" id="AY723749">
    <property type="protein sequence ID" value="AAV68702.1"/>
    <property type="molecule type" value="Genomic_DNA"/>
</dbReference>
<dbReference type="SMR" id="Q5MNI7"/>
<dbReference type="GO" id="GO:0050660">
    <property type="term" value="F:flavin adenine dinucleotide binding"/>
    <property type="evidence" value="ECO:0007669"/>
    <property type="project" value="InterPro"/>
</dbReference>
<dbReference type="GO" id="GO:0004499">
    <property type="term" value="F:N,N-dimethylaniline monooxygenase activity"/>
    <property type="evidence" value="ECO:0007669"/>
    <property type="project" value="InterPro"/>
</dbReference>
<dbReference type="GO" id="GO:0050661">
    <property type="term" value="F:NADP binding"/>
    <property type="evidence" value="ECO:0007669"/>
    <property type="project" value="InterPro"/>
</dbReference>
<dbReference type="GO" id="GO:0009820">
    <property type="term" value="P:alkaloid metabolic process"/>
    <property type="evidence" value="ECO:0007669"/>
    <property type="project" value="UniProtKB-KW"/>
</dbReference>
<dbReference type="Gene3D" id="3.50.50.60">
    <property type="entry name" value="FAD/NAD(P)-binding domain"/>
    <property type="match status" value="2"/>
</dbReference>
<dbReference type="InterPro" id="IPR050775">
    <property type="entry name" value="FAD-binding_Monooxygenases"/>
</dbReference>
<dbReference type="InterPro" id="IPR036188">
    <property type="entry name" value="FAD/NAD-bd_sf"/>
</dbReference>
<dbReference type="InterPro" id="IPR020946">
    <property type="entry name" value="Flavin_mOase-like"/>
</dbReference>
<dbReference type="PANTHER" id="PTHR43098">
    <property type="entry name" value="L-ORNITHINE N(5)-MONOOXYGENASE-RELATED"/>
    <property type="match status" value="1"/>
</dbReference>
<dbReference type="PANTHER" id="PTHR43098:SF3">
    <property type="entry name" value="L-ORNITHINE N(5)-MONOOXYGENASE-RELATED"/>
    <property type="match status" value="1"/>
</dbReference>
<dbReference type="Pfam" id="PF00743">
    <property type="entry name" value="FMO-like"/>
    <property type="match status" value="1"/>
</dbReference>
<dbReference type="PRINTS" id="PR00411">
    <property type="entry name" value="PNDRDTASEI"/>
</dbReference>
<dbReference type="SUPFAM" id="SSF51905">
    <property type="entry name" value="FAD/NAD(P)-binding domain"/>
    <property type="match status" value="2"/>
</dbReference>
<reference key="1">
    <citation type="journal article" date="2005" name="Genetics">
        <title>Gene clusters for insecticidal loline alkaloids in the grass-endophytic fungus Neotyphodium uncinatum.</title>
        <authorList>
            <person name="Spiering M.J."/>
            <person name="Moon C.D."/>
            <person name="Wilkinson H.H."/>
            <person name="Schardl C.L."/>
        </authorList>
    </citation>
    <scope>NUCLEOTIDE SEQUENCE [GENOMIC DNA]</scope>
    <scope>INDUCTION</scope>
    <scope>FUNCTION</scope>
    <source>
        <strain>CBS 102646</strain>
    </source>
</reference>
<reference key="2">
    <citation type="journal article" date="2005" name="ChemBioChem">
        <title>Biosynthetic precursors of fungal pyrrolizidines, the loline alkaloids.</title>
        <authorList>
            <person name="Blankenship J.D."/>
            <person name="Houseknecht J.B."/>
            <person name="Pal S."/>
            <person name="Bush L.P."/>
            <person name="Grossman R.B."/>
            <person name="Schardl C.L."/>
        </authorList>
    </citation>
    <scope>FUNCTION</scope>
</reference>
<reference key="3">
    <citation type="journal article" date="2006" name="ChemBioChem">
        <title>On the sequence of bond formation in loline alkaloid biosynthesis.</title>
        <authorList>
            <person name="Faulkner J.R."/>
            <person name="Hussaini S.R."/>
            <person name="Blankenship J.D."/>
            <person name="Pal S."/>
            <person name="Branan B.M."/>
            <person name="Grossman R.B."/>
            <person name="Schardl C.L."/>
        </authorList>
    </citation>
    <scope>FUNCTION</scope>
</reference>
<reference key="4">
    <citation type="journal article" date="2008" name="Fungal Genet. Biol.">
        <title>Role of the LolP cytochrome P450 monooxygenase in loline alkaloid biosynthesis.</title>
        <authorList>
            <person name="Spiering M.J."/>
            <person name="Faulkner J.R."/>
            <person name="Zhang D.X."/>
            <person name="Machado C."/>
            <person name="Grossman R.B."/>
            <person name="Schardl C.L."/>
        </authorList>
    </citation>
    <scope>FUNCTION</scope>
    <source>
        <strain>CBS 102646</strain>
    </source>
</reference>
<reference key="5">
    <citation type="journal article" date="2014" name="Phytochemistry">
        <title>Ether bridge formation in loline alkaloid biosynthesis.</title>
        <authorList>
            <person name="Pan J."/>
            <person name="Bhardwaj M."/>
            <person name="Faulkner J.R."/>
            <person name="Nagabhyru P."/>
            <person name="Charlton N.D."/>
            <person name="Higashi R.M."/>
            <person name="Miller A.F."/>
            <person name="Young C.A."/>
            <person name="Grossman R.B."/>
            <person name="Schardl C.L."/>
        </authorList>
    </citation>
    <scope>FUNCTION</scope>
</reference>
<reference key="6">
    <citation type="journal article" date="2014" name="PLoS ONE">
        <title>Enzymes from fungal and plant origin required for chemical diversification of insecticidal loline alkaloids in grass-Epichloe symbiota.</title>
        <authorList>
            <person name="Pan J."/>
            <person name="Bhardwaj M."/>
            <person name="Nagabhyru P."/>
            <person name="Grossman R.B."/>
            <person name="Schardl C.L."/>
        </authorList>
    </citation>
    <scope>FUNCTION</scope>
    <scope>BIOTECHNOLOGY</scope>
</reference>
<reference key="7">
    <citation type="journal article" date="2018" name="Biochemistry">
        <title>Installation of the ether bridge of lolines by the iron- and 2-oxoglutarate-dependent oxygenase, lolO: regio- and stereochemistry of sequential hydroxylation and oxacyclization reactions.</title>
        <authorList>
            <person name="Pan J."/>
            <person name="Bhardwaj M."/>
            <person name="Zhang B."/>
            <person name="Chang W.C."/>
            <person name="Schardl C.L."/>
            <person name="Krebs C."/>
            <person name="Grossman R.B."/>
            <person name="Bollinger J.M. Jr."/>
        </authorList>
    </citation>
    <scope>FUNCTION</scope>
</reference>
<evidence type="ECO:0000250" key="1">
    <source>
        <dbReference type="UniProtKB" id="H3JQW0"/>
    </source>
</evidence>
<evidence type="ECO:0000269" key="2">
    <source>
    </source>
</evidence>
<evidence type="ECO:0000269" key="3">
    <source>
    </source>
</evidence>
<evidence type="ECO:0000269" key="4">
    <source>
    </source>
</evidence>
<evidence type="ECO:0000269" key="5">
    <source>
    </source>
</evidence>
<evidence type="ECO:0000269" key="6">
    <source>
    </source>
</evidence>
<evidence type="ECO:0000269" key="7">
    <source>
    </source>
</evidence>
<evidence type="ECO:0000269" key="8">
    <source>
    </source>
</evidence>
<evidence type="ECO:0000303" key="9">
    <source>
    </source>
</evidence>
<evidence type="ECO:0000305" key="10"/>
<evidence type="ECO:0000305" key="11">
    <source>
    </source>
</evidence>
<evidence type="ECO:0000305" key="12">
    <source>
    </source>
</evidence>
<gene>
    <name evidence="9" type="primary">lolF1</name>
    <name evidence="9" type="synonym">lolF</name>
</gene>
<proteinExistence type="evidence at transcript level"/>